<reference key="1">
    <citation type="journal article" date="2005" name="Nature">
        <title>The genome of the social amoeba Dictyostelium discoideum.</title>
        <authorList>
            <person name="Eichinger L."/>
            <person name="Pachebat J.A."/>
            <person name="Gloeckner G."/>
            <person name="Rajandream M.A."/>
            <person name="Sucgang R."/>
            <person name="Berriman M."/>
            <person name="Song J."/>
            <person name="Olsen R."/>
            <person name="Szafranski K."/>
            <person name="Xu Q."/>
            <person name="Tunggal B."/>
            <person name="Kummerfeld S."/>
            <person name="Madera M."/>
            <person name="Konfortov B.A."/>
            <person name="Rivero F."/>
            <person name="Bankier A.T."/>
            <person name="Lehmann R."/>
            <person name="Hamlin N."/>
            <person name="Davies R."/>
            <person name="Gaudet P."/>
            <person name="Fey P."/>
            <person name="Pilcher K."/>
            <person name="Chen G."/>
            <person name="Saunders D."/>
            <person name="Sodergren E.J."/>
            <person name="Davis P."/>
            <person name="Kerhornou A."/>
            <person name="Nie X."/>
            <person name="Hall N."/>
            <person name="Anjard C."/>
            <person name="Hemphill L."/>
            <person name="Bason N."/>
            <person name="Farbrother P."/>
            <person name="Desany B."/>
            <person name="Just E."/>
            <person name="Morio T."/>
            <person name="Rost R."/>
            <person name="Churcher C.M."/>
            <person name="Cooper J."/>
            <person name="Haydock S."/>
            <person name="van Driessche N."/>
            <person name="Cronin A."/>
            <person name="Goodhead I."/>
            <person name="Muzny D.M."/>
            <person name="Mourier T."/>
            <person name="Pain A."/>
            <person name="Lu M."/>
            <person name="Harper D."/>
            <person name="Lindsay R."/>
            <person name="Hauser H."/>
            <person name="James K.D."/>
            <person name="Quiles M."/>
            <person name="Madan Babu M."/>
            <person name="Saito T."/>
            <person name="Buchrieser C."/>
            <person name="Wardroper A."/>
            <person name="Felder M."/>
            <person name="Thangavelu M."/>
            <person name="Johnson D."/>
            <person name="Knights A."/>
            <person name="Loulseged H."/>
            <person name="Mungall K.L."/>
            <person name="Oliver K."/>
            <person name="Price C."/>
            <person name="Quail M.A."/>
            <person name="Urushihara H."/>
            <person name="Hernandez J."/>
            <person name="Rabbinowitsch E."/>
            <person name="Steffen D."/>
            <person name="Sanders M."/>
            <person name="Ma J."/>
            <person name="Kohara Y."/>
            <person name="Sharp S."/>
            <person name="Simmonds M.N."/>
            <person name="Spiegler S."/>
            <person name="Tivey A."/>
            <person name="Sugano S."/>
            <person name="White B."/>
            <person name="Walker D."/>
            <person name="Woodward J.R."/>
            <person name="Winckler T."/>
            <person name="Tanaka Y."/>
            <person name="Shaulsky G."/>
            <person name="Schleicher M."/>
            <person name="Weinstock G.M."/>
            <person name="Rosenthal A."/>
            <person name="Cox E.C."/>
            <person name="Chisholm R.L."/>
            <person name="Gibbs R.A."/>
            <person name="Loomis W.F."/>
            <person name="Platzer M."/>
            <person name="Kay R.R."/>
            <person name="Williams J.G."/>
            <person name="Dear P.H."/>
            <person name="Noegel A.A."/>
            <person name="Barrell B.G."/>
            <person name="Kuspa A."/>
        </authorList>
    </citation>
    <scope>NUCLEOTIDE SEQUENCE [LARGE SCALE GENOMIC DNA]</scope>
    <source>
        <strain>AX4</strain>
    </source>
</reference>
<reference key="2">
    <citation type="journal article" date="2005" name="DNA Repair">
        <title>Putative homologues of the DNA-dependent protein kinase catalytic subunit (DNA-PKcs) and other components of the non-homologous end joining machinery in Dictyostelium discoideum.</title>
        <authorList>
            <person name="Block W.D."/>
            <person name="Lees-Miller S.P."/>
        </authorList>
    </citation>
    <scope>NOMENCLATURE</scope>
</reference>
<accession>Q54YJ7</accession>
<keyword id="KW-0227">DNA damage</keyword>
<keyword id="KW-0233">DNA recombination</keyword>
<keyword id="KW-0234">DNA repair</keyword>
<keyword id="KW-0238">DNA-binding</keyword>
<keyword id="KW-0539">Nucleus</keyword>
<keyword id="KW-1185">Reference proteome</keyword>
<dbReference type="EMBL" id="AAFI02000023">
    <property type="protein sequence ID" value="EAL68274.1"/>
    <property type="molecule type" value="Genomic_DNA"/>
</dbReference>
<dbReference type="RefSeq" id="XP_642205.1">
    <property type="nucleotide sequence ID" value="XM_637113.1"/>
</dbReference>
<dbReference type="SMR" id="Q54YJ7"/>
<dbReference type="FunCoup" id="Q54YJ7">
    <property type="interactions" value="65"/>
</dbReference>
<dbReference type="STRING" id="44689.Q54YJ7"/>
<dbReference type="PaxDb" id="44689-DDB0232253"/>
<dbReference type="EnsemblProtists" id="EAL68274">
    <property type="protein sequence ID" value="EAL68274"/>
    <property type="gene ID" value="DDB_G0278203"/>
</dbReference>
<dbReference type="GeneID" id="8621412"/>
<dbReference type="KEGG" id="ddi:DDB_G0278203"/>
<dbReference type="dictyBase" id="DDB_G0278203">
    <property type="gene designation" value="xrcc4"/>
</dbReference>
<dbReference type="VEuPathDB" id="AmoebaDB:DDB_G0278203"/>
<dbReference type="eggNOG" id="ENOG502RYHV">
    <property type="taxonomic scope" value="Eukaryota"/>
</dbReference>
<dbReference type="HOGENOM" id="CLU_603304_0_0_1"/>
<dbReference type="InParanoid" id="Q54YJ7"/>
<dbReference type="OMA" id="ASEEYMN"/>
<dbReference type="Reactome" id="R-DDI-5693571">
    <property type="pathway name" value="Nonhomologous End-Joining (NHEJ)"/>
</dbReference>
<dbReference type="PRO" id="PR:Q54YJ7"/>
<dbReference type="Proteomes" id="UP000002195">
    <property type="component" value="Chromosome 3"/>
</dbReference>
<dbReference type="GO" id="GO:0032807">
    <property type="term" value="C:DNA ligase IV complex"/>
    <property type="evidence" value="ECO:0000318"/>
    <property type="project" value="GO_Central"/>
</dbReference>
<dbReference type="GO" id="GO:0005958">
    <property type="term" value="C:DNA-dependent protein kinase-DNA ligase 4 complex"/>
    <property type="evidence" value="ECO:0000250"/>
    <property type="project" value="dictyBase"/>
</dbReference>
<dbReference type="GO" id="GO:0005634">
    <property type="term" value="C:nucleus"/>
    <property type="evidence" value="ECO:0000250"/>
    <property type="project" value="dictyBase"/>
</dbReference>
<dbReference type="GO" id="GO:0003677">
    <property type="term" value="F:DNA binding"/>
    <property type="evidence" value="ECO:0007669"/>
    <property type="project" value="UniProtKB-KW"/>
</dbReference>
<dbReference type="GO" id="GO:0006974">
    <property type="term" value="P:DNA damage response"/>
    <property type="evidence" value="ECO:0000250"/>
    <property type="project" value="dictyBase"/>
</dbReference>
<dbReference type="GO" id="GO:0006310">
    <property type="term" value="P:DNA recombination"/>
    <property type="evidence" value="ECO:0007669"/>
    <property type="project" value="UniProtKB-KW"/>
</dbReference>
<dbReference type="GO" id="GO:0006302">
    <property type="term" value="P:double-strand break repair"/>
    <property type="evidence" value="ECO:0000250"/>
    <property type="project" value="dictyBase"/>
</dbReference>
<dbReference type="GO" id="GO:0006303">
    <property type="term" value="P:double-strand break repair via nonhomologous end joining"/>
    <property type="evidence" value="ECO:0000318"/>
    <property type="project" value="GO_Central"/>
</dbReference>
<dbReference type="GO" id="GO:0010165">
    <property type="term" value="P:response to X-ray"/>
    <property type="evidence" value="ECO:0000318"/>
    <property type="project" value="GO_Central"/>
</dbReference>
<dbReference type="FunFam" id="2.170.210.10:FF:000006">
    <property type="entry name" value="DNA repair protein xrcc4"/>
    <property type="match status" value="1"/>
</dbReference>
<dbReference type="Gene3D" id="1.20.5.370">
    <property type="match status" value="1"/>
</dbReference>
<dbReference type="Gene3D" id="2.170.210.10">
    <property type="entry name" value="DNA double-strand break repair and VJ recombination XRCC4, N-terminal"/>
    <property type="match status" value="1"/>
</dbReference>
<dbReference type="InterPro" id="IPR010585">
    <property type="entry name" value="DNA_repair_prot_XRCC4"/>
</dbReference>
<dbReference type="InterPro" id="IPR014751">
    <property type="entry name" value="XRCC4-like_C"/>
</dbReference>
<dbReference type="InterPro" id="IPR038051">
    <property type="entry name" value="XRCC4-like_N_sf"/>
</dbReference>
<dbReference type="InterPro" id="IPR053961">
    <property type="entry name" value="XRCC4_N"/>
</dbReference>
<dbReference type="InterPro" id="IPR009089">
    <property type="entry name" value="XRCC4_N_sf"/>
</dbReference>
<dbReference type="PANTHER" id="PTHR28559">
    <property type="entry name" value="DNA REPAIR PROTEIN XRCC4"/>
    <property type="match status" value="1"/>
</dbReference>
<dbReference type="PANTHER" id="PTHR28559:SF1">
    <property type="entry name" value="DNA REPAIR PROTEIN XRCC4"/>
    <property type="match status" value="1"/>
</dbReference>
<dbReference type="Pfam" id="PF06632">
    <property type="entry name" value="XRCC4"/>
    <property type="match status" value="1"/>
</dbReference>
<dbReference type="SUPFAM" id="SSF58022">
    <property type="entry name" value="XRCC4, C-terminal oligomerization domain"/>
    <property type="match status" value="1"/>
</dbReference>
<dbReference type="SUPFAM" id="SSF50809">
    <property type="entry name" value="XRCC4, N-terminal domain"/>
    <property type="match status" value="1"/>
</dbReference>
<name>XRCC4_DICDI</name>
<proteinExistence type="inferred from homology"/>
<evidence type="ECO:0000250" key="1">
    <source>
        <dbReference type="UniProtKB" id="Q13426"/>
    </source>
</evidence>
<evidence type="ECO:0000256" key="2">
    <source>
        <dbReference type="SAM" id="MobiDB-lite"/>
    </source>
</evidence>
<evidence type="ECO:0000305" key="3"/>
<comment type="function">
    <text evidence="1">Involved in DNA non-homologous end joining (NHEJ); required for double-strand break repair and V(D)J recombination. Binds to DNA and to DNA ligase IV (lig4). The lig4-xrcc4 complex is responsible for the NHEJ ligation step, and xrcc4 enhances the joining activity of lig4. Binding of the lig4-xrcc4 complex to DNA ends is dependent on the assembly of the DNA-dependent protein kinase complex DNA-PK to these DNA ends (By similarity).</text>
</comment>
<comment type="subcellular location">
    <subcellularLocation>
        <location evidence="1">Nucleus</location>
    </subcellularLocation>
</comment>
<comment type="similarity">
    <text evidence="3">Belongs to the XRCC4-XLF family. XRCC4 subfamily.</text>
</comment>
<gene>
    <name type="primary">xrcc4</name>
    <name type="ORF">DDB_G0278203</name>
</gene>
<feature type="chain" id="PRO_0000377484" description="DNA repair protein xrcc4">
    <location>
        <begin position="1"/>
        <end position="454"/>
    </location>
</feature>
<feature type="region of interest" description="Disordered" evidence="2">
    <location>
        <begin position="233"/>
        <end position="324"/>
    </location>
</feature>
<feature type="region of interest" description="Disordered" evidence="2">
    <location>
        <begin position="368"/>
        <end position="402"/>
    </location>
</feature>
<feature type="compositionally biased region" description="Low complexity" evidence="2">
    <location>
        <begin position="233"/>
        <end position="258"/>
    </location>
</feature>
<feature type="compositionally biased region" description="Acidic residues" evidence="2">
    <location>
        <begin position="298"/>
        <end position="310"/>
    </location>
</feature>
<sequence length="454" mass="52726">MNESSVSRFENITDDSGNTNGGFYYLKCNWQYNSFTIYLTDLTNVWSSNVTTKYIENILKPQGMSFDQYFQLLKKSLLKQDQTKREFDYKIDKYKRKNNNNINNNNEDIEFIIIIILSEFDNINVKSSIPLIKLSNHFTTFQHYFDWLFDKYQSLSLQNQTLTLQTQSLQSQFNQSLEQNKLFQLEKDRIESNLIEKFIIILNEKKKKIKEYKQPINNLLLEQKSISSSLSNCKCNNNNNNNNNKSIVNNNKNKSPSKQQVYTTPKKKKRNYQSNLINIDNDDDDDLGNNDNVNNINDENDNDNDNDNEEDYKPTFNNSTPPLLDLLSNDYDSYYNVPTNVRKKFKPTPTLTTTTTTTTTTTTASIIKTPTKKRNSISPQKSPHHHRNINIKKNNNNNNPSSPMKKYNANGTLIPNNNINSLIPITPMKSKSKLFNFNDDDNHDIGASELLNDL</sequence>
<organism>
    <name type="scientific">Dictyostelium discoideum</name>
    <name type="common">Social amoeba</name>
    <dbReference type="NCBI Taxonomy" id="44689"/>
    <lineage>
        <taxon>Eukaryota</taxon>
        <taxon>Amoebozoa</taxon>
        <taxon>Evosea</taxon>
        <taxon>Eumycetozoa</taxon>
        <taxon>Dictyostelia</taxon>
        <taxon>Dictyosteliales</taxon>
        <taxon>Dictyosteliaceae</taxon>
        <taxon>Dictyostelium</taxon>
    </lineage>
</organism>
<protein>
    <recommendedName>
        <fullName>DNA repair protein xrcc4</fullName>
    </recommendedName>
</protein>